<reference key="1">
    <citation type="journal article" date="2000" name="Mol. Phylogenet. Evol.">
        <title>Molecular systematics of pikas (genus Ochotona) inferred from mitochondrial DNA sequences.</title>
        <authorList>
            <person name="Yu N."/>
            <person name="Zheng C."/>
            <person name="Zhang Y.P."/>
            <person name="Li W.H."/>
        </authorList>
    </citation>
    <scope>NUCLEOTIDE SEQUENCE [GENOMIC DNA]</scope>
    <source>
        <strain>Isolate 93J035</strain>
        <strain>Isolate 93J039</strain>
        <strain>Isolate 94J003</strain>
    </source>
</reference>
<name>CYB_OCHCU</name>
<gene>
    <name type="primary">MT-CYB</name>
    <name type="synonym">COB</name>
    <name type="synonym">CYTB</name>
    <name type="synonym">MTCYB</name>
</gene>
<evidence type="ECO:0000250" key="1"/>
<evidence type="ECO:0000250" key="2">
    <source>
        <dbReference type="UniProtKB" id="P00157"/>
    </source>
</evidence>
<evidence type="ECO:0000255" key="3">
    <source>
        <dbReference type="PROSITE-ProRule" id="PRU00967"/>
    </source>
</evidence>
<evidence type="ECO:0000255" key="4">
    <source>
        <dbReference type="PROSITE-ProRule" id="PRU00968"/>
    </source>
</evidence>
<protein>
    <recommendedName>
        <fullName>Cytochrome b</fullName>
    </recommendedName>
    <alternativeName>
        <fullName>Complex III subunit 3</fullName>
    </alternativeName>
    <alternativeName>
        <fullName>Complex III subunit III</fullName>
    </alternativeName>
    <alternativeName>
        <fullName>Cytochrome b-c1 complex subunit 3</fullName>
    </alternativeName>
    <alternativeName>
        <fullName>Ubiquinol-cytochrome-c reductase complex cytochrome b subunit</fullName>
    </alternativeName>
</protein>
<comment type="function">
    <text evidence="2">Component of the ubiquinol-cytochrome c reductase complex (complex III or cytochrome b-c1 complex) that is part of the mitochondrial respiratory chain. The b-c1 complex mediates electron transfer from ubiquinol to cytochrome c. Contributes to the generation of a proton gradient across the mitochondrial membrane that is then used for ATP synthesis.</text>
</comment>
<comment type="cofactor">
    <cofactor evidence="2">
        <name>heme b</name>
        <dbReference type="ChEBI" id="CHEBI:60344"/>
    </cofactor>
    <text evidence="2">Binds 2 heme b groups non-covalently.</text>
</comment>
<comment type="subunit">
    <text evidence="2">The cytochrome bc1 complex contains 11 subunits: 3 respiratory subunits (MT-CYB, CYC1 and UQCRFS1), 2 core proteins (UQCRC1 and UQCRC2) and 6 low-molecular weight proteins (UQCRH/QCR6, UQCRB/QCR7, UQCRQ/QCR8, UQCR10/QCR9, UQCR11/QCR10 and a cleavage product of UQCRFS1). This cytochrome bc1 complex then forms a dimer.</text>
</comment>
<comment type="subcellular location">
    <subcellularLocation>
        <location evidence="2">Mitochondrion inner membrane</location>
        <topology evidence="2">Multi-pass membrane protein</topology>
    </subcellularLocation>
</comment>
<comment type="miscellaneous">
    <text evidence="1">Heme 1 (or BL or b562) is low-potential and absorbs at about 562 nm, and heme 2 (or BH or b566) is high-potential and absorbs at about 566 nm.</text>
</comment>
<comment type="similarity">
    <text evidence="3 4">Belongs to the cytochrome b family.</text>
</comment>
<comment type="caution">
    <text evidence="2">The full-length protein contains only eight transmembrane helices, not nine as predicted by bioinformatics tools.</text>
</comment>
<keyword id="KW-0249">Electron transport</keyword>
<keyword id="KW-0349">Heme</keyword>
<keyword id="KW-0408">Iron</keyword>
<keyword id="KW-0472">Membrane</keyword>
<keyword id="KW-0479">Metal-binding</keyword>
<keyword id="KW-0496">Mitochondrion</keyword>
<keyword id="KW-0999">Mitochondrion inner membrane</keyword>
<keyword id="KW-0679">Respiratory chain</keyword>
<keyword id="KW-0812">Transmembrane</keyword>
<keyword id="KW-1133">Transmembrane helix</keyword>
<keyword id="KW-0813">Transport</keyword>
<keyword id="KW-0830">Ubiquinone</keyword>
<sequence length="379" mass="42554">MTNIRKSHPLMKIVNHSLIDLPAPSNISAWWNFGSLLGLCLGIQIITGLFLAMHYTSDTLTAFSSVTHICRDVNYGWIIRYLHANGASMFFICLFLHVGRGIYYGSYTYSETWNIGILLLFAVMATAFMGYVLPWGQMSFWGATVITNLLSAIPYIGTDLVQWIWGGFSVDKATLTRFFAFHFILPFIIAALVMVHLLFLHETGSNNPTGIISDADKIPFHPYYTVKDALGFLLLIALLLTLVLFSPDLLGDPDNYTPANPLNTPPHIKPEWYFLFAYAILRSIPNKLGGVLALVLSIAILAVMPLLHTSKQRSMMFRPISQCLFWVLVADLLTLTWIGGQPVEHPFIIIGQLASFLYFSLILILMPTCSLIENKLLKW</sequence>
<accession>Q9G1B9</accession>
<organism>
    <name type="scientific">Ochotona curzoniae</name>
    <name type="common">Black-lipped pika</name>
    <dbReference type="NCBI Taxonomy" id="130825"/>
    <lineage>
        <taxon>Eukaryota</taxon>
        <taxon>Metazoa</taxon>
        <taxon>Chordata</taxon>
        <taxon>Craniata</taxon>
        <taxon>Vertebrata</taxon>
        <taxon>Euteleostomi</taxon>
        <taxon>Mammalia</taxon>
        <taxon>Eutheria</taxon>
        <taxon>Euarchontoglires</taxon>
        <taxon>Glires</taxon>
        <taxon>Lagomorpha</taxon>
        <taxon>Ochotonidae</taxon>
        <taxon>Ochotona</taxon>
    </lineage>
</organism>
<geneLocation type="mitochondrion"/>
<proteinExistence type="inferred from homology"/>
<dbReference type="EMBL" id="AF273001">
    <property type="protein sequence ID" value="AAG00196.1"/>
    <property type="molecule type" value="Genomic_DNA"/>
</dbReference>
<dbReference type="EMBL" id="AF273002">
    <property type="protein sequence ID" value="AAG00197.1"/>
    <property type="molecule type" value="Genomic_DNA"/>
</dbReference>
<dbReference type="EMBL" id="AF273004">
    <property type="protein sequence ID" value="AAG00199.1"/>
    <property type="molecule type" value="Genomic_DNA"/>
</dbReference>
<dbReference type="SMR" id="Q9G1B9"/>
<dbReference type="GO" id="GO:0005743">
    <property type="term" value="C:mitochondrial inner membrane"/>
    <property type="evidence" value="ECO:0007669"/>
    <property type="project" value="UniProtKB-SubCell"/>
</dbReference>
<dbReference type="GO" id="GO:0045275">
    <property type="term" value="C:respiratory chain complex III"/>
    <property type="evidence" value="ECO:0007669"/>
    <property type="project" value="InterPro"/>
</dbReference>
<dbReference type="GO" id="GO:0046872">
    <property type="term" value="F:metal ion binding"/>
    <property type="evidence" value="ECO:0007669"/>
    <property type="project" value="UniProtKB-KW"/>
</dbReference>
<dbReference type="GO" id="GO:0008121">
    <property type="term" value="F:ubiquinol-cytochrome-c reductase activity"/>
    <property type="evidence" value="ECO:0007669"/>
    <property type="project" value="InterPro"/>
</dbReference>
<dbReference type="GO" id="GO:0006122">
    <property type="term" value="P:mitochondrial electron transport, ubiquinol to cytochrome c"/>
    <property type="evidence" value="ECO:0007669"/>
    <property type="project" value="TreeGrafter"/>
</dbReference>
<dbReference type="CDD" id="cd00290">
    <property type="entry name" value="cytochrome_b_C"/>
    <property type="match status" value="1"/>
</dbReference>
<dbReference type="CDD" id="cd00284">
    <property type="entry name" value="Cytochrome_b_N"/>
    <property type="match status" value="1"/>
</dbReference>
<dbReference type="FunFam" id="1.20.810.10:FF:000002">
    <property type="entry name" value="Cytochrome b"/>
    <property type="match status" value="1"/>
</dbReference>
<dbReference type="Gene3D" id="1.20.810.10">
    <property type="entry name" value="Cytochrome Bc1 Complex, Chain C"/>
    <property type="match status" value="1"/>
</dbReference>
<dbReference type="InterPro" id="IPR005798">
    <property type="entry name" value="Cyt_b/b6_C"/>
</dbReference>
<dbReference type="InterPro" id="IPR036150">
    <property type="entry name" value="Cyt_b/b6_C_sf"/>
</dbReference>
<dbReference type="InterPro" id="IPR005797">
    <property type="entry name" value="Cyt_b/b6_N"/>
</dbReference>
<dbReference type="InterPro" id="IPR027387">
    <property type="entry name" value="Cytb/b6-like_sf"/>
</dbReference>
<dbReference type="InterPro" id="IPR030689">
    <property type="entry name" value="Cytochrome_b"/>
</dbReference>
<dbReference type="InterPro" id="IPR048260">
    <property type="entry name" value="Cytochrome_b_C_euk/bac"/>
</dbReference>
<dbReference type="InterPro" id="IPR048259">
    <property type="entry name" value="Cytochrome_b_N_euk/bac"/>
</dbReference>
<dbReference type="InterPro" id="IPR016174">
    <property type="entry name" value="Di-haem_cyt_TM"/>
</dbReference>
<dbReference type="PANTHER" id="PTHR19271">
    <property type="entry name" value="CYTOCHROME B"/>
    <property type="match status" value="1"/>
</dbReference>
<dbReference type="PANTHER" id="PTHR19271:SF16">
    <property type="entry name" value="CYTOCHROME B"/>
    <property type="match status" value="1"/>
</dbReference>
<dbReference type="Pfam" id="PF00032">
    <property type="entry name" value="Cytochrom_B_C"/>
    <property type="match status" value="1"/>
</dbReference>
<dbReference type="Pfam" id="PF00033">
    <property type="entry name" value="Cytochrome_B"/>
    <property type="match status" value="1"/>
</dbReference>
<dbReference type="PIRSF" id="PIRSF038885">
    <property type="entry name" value="COB"/>
    <property type="match status" value="1"/>
</dbReference>
<dbReference type="SUPFAM" id="SSF81648">
    <property type="entry name" value="a domain/subunit of cytochrome bc1 complex (Ubiquinol-cytochrome c reductase)"/>
    <property type="match status" value="1"/>
</dbReference>
<dbReference type="SUPFAM" id="SSF81342">
    <property type="entry name" value="Transmembrane di-heme cytochromes"/>
    <property type="match status" value="1"/>
</dbReference>
<dbReference type="PROSITE" id="PS51003">
    <property type="entry name" value="CYTB_CTER"/>
    <property type="match status" value="1"/>
</dbReference>
<dbReference type="PROSITE" id="PS51002">
    <property type="entry name" value="CYTB_NTER"/>
    <property type="match status" value="1"/>
</dbReference>
<feature type="chain" id="PRO_0000061298" description="Cytochrome b">
    <location>
        <begin position="1"/>
        <end position="379"/>
    </location>
</feature>
<feature type="transmembrane region" description="Helical" evidence="2">
    <location>
        <begin position="33"/>
        <end position="53"/>
    </location>
</feature>
<feature type="transmembrane region" description="Helical" evidence="2">
    <location>
        <begin position="77"/>
        <end position="98"/>
    </location>
</feature>
<feature type="transmembrane region" description="Helical" evidence="2">
    <location>
        <begin position="113"/>
        <end position="133"/>
    </location>
</feature>
<feature type="transmembrane region" description="Helical" evidence="2">
    <location>
        <begin position="178"/>
        <end position="198"/>
    </location>
</feature>
<feature type="transmembrane region" description="Helical" evidence="2">
    <location>
        <begin position="226"/>
        <end position="246"/>
    </location>
</feature>
<feature type="transmembrane region" description="Helical" evidence="2">
    <location>
        <begin position="288"/>
        <end position="308"/>
    </location>
</feature>
<feature type="transmembrane region" description="Helical" evidence="2">
    <location>
        <begin position="320"/>
        <end position="340"/>
    </location>
</feature>
<feature type="transmembrane region" description="Helical" evidence="2">
    <location>
        <begin position="347"/>
        <end position="367"/>
    </location>
</feature>
<feature type="binding site" description="axial binding residue" evidence="2">
    <location>
        <position position="83"/>
    </location>
    <ligand>
        <name>heme b</name>
        <dbReference type="ChEBI" id="CHEBI:60344"/>
        <label>b562</label>
    </ligand>
    <ligandPart>
        <name>Fe</name>
        <dbReference type="ChEBI" id="CHEBI:18248"/>
    </ligandPart>
</feature>
<feature type="binding site" description="axial binding residue" evidence="2">
    <location>
        <position position="97"/>
    </location>
    <ligand>
        <name>heme b</name>
        <dbReference type="ChEBI" id="CHEBI:60344"/>
        <label>b566</label>
    </ligand>
    <ligandPart>
        <name>Fe</name>
        <dbReference type="ChEBI" id="CHEBI:18248"/>
    </ligandPart>
</feature>
<feature type="binding site" description="axial binding residue" evidence="2">
    <location>
        <position position="182"/>
    </location>
    <ligand>
        <name>heme b</name>
        <dbReference type="ChEBI" id="CHEBI:60344"/>
        <label>b562</label>
    </ligand>
    <ligandPart>
        <name>Fe</name>
        <dbReference type="ChEBI" id="CHEBI:18248"/>
    </ligandPart>
</feature>
<feature type="binding site" description="axial binding residue" evidence="2">
    <location>
        <position position="196"/>
    </location>
    <ligand>
        <name>heme b</name>
        <dbReference type="ChEBI" id="CHEBI:60344"/>
        <label>b566</label>
    </ligand>
    <ligandPart>
        <name>Fe</name>
        <dbReference type="ChEBI" id="CHEBI:18248"/>
    </ligandPart>
</feature>
<feature type="binding site" evidence="2">
    <location>
        <position position="201"/>
    </location>
    <ligand>
        <name>a ubiquinone</name>
        <dbReference type="ChEBI" id="CHEBI:16389"/>
    </ligand>
</feature>